<keyword id="KW-0067">ATP-binding</keyword>
<keyword id="KW-0963">Cytoplasm</keyword>
<keyword id="KW-0418">Kinase</keyword>
<keyword id="KW-0547">Nucleotide-binding</keyword>
<keyword id="KW-1185">Reference proteome</keyword>
<keyword id="KW-0808">Transferase</keyword>
<feature type="chain" id="PRO_0000279388" description="Adenylate kinase 8">
    <location>
        <begin position="1"/>
        <end position="485"/>
    </location>
</feature>
<feature type="region of interest" description="Adenylate kinase 1" evidence="2">
    <location>
        <begin position="58"/>
        <end position="258"/>
    </location>
</feature>
<feature type="region of interest" description="NMP 1" evidence="1">
    <location>
        <begin position="87"/>
        <end position="113"/>
    </location>
</feature>
<feature type="region of interest" description="LID 1" evidence="1">
    <location>
        <begin position="177"/>
        <end position="206"/>
    </location>
</feature>
<feature type="region of interest" description="Adenylate kinase 2" evidence="2">
    <location>
        <begin position="269"/>
        <end position="471"/>
    </location>
</feature>
<feature type="region of interest" description="NMP 2" evidence="1">
    <location>
        <begin position="298"/>
        <end position="327"/>
    </location>
</feature>
<feature type="region of interest" description="LID 2" evidence="1">
    <location>
        <begin position="391"/>
        <end position="424"/>
    </location>
</feature>
<feature type="binding site" evidence="1">
    <location>
        <begin position="67"/>
        <end position="72"/>
    </location>
    <ligand>
        <name>ATP</name>
        <dbReference type="ChEBI" id="CHEBI:30616"/>
        <label>1</label>
    </ligand>
</feature>
<feature type="binding site" evidence="1">
    <location>
        <begin position="140"/>
        <end position="143"/>
    </location>
    <ligand>
        <name>AMP</name>
        <dbReference type="ChEBI" id="CHEBI:456215"/>
        <label>1</label>
    </ligand>
</feature>
<feature type="binding site" evidence="1">
    <location>
        <position position="147"/>
    </location>
    <ligand>
        <name>AMP</name>
        <dbReference type="ChEBI" id="CHEBI:456215"/>
        <label>1</label>
    </ligand>
</feature>
<feature type="binding site" evidence="1">
    <location>
        <position position="218"/>
    </location>
    <ligand>
        <name>AMP</name>
        <dbReference type="ChEBI" id="CHEBI:456215"/>
        <label>1</label>
    </ligand>
</feature>
<feature type="binding site" evidence="1">
    <location>
        <begin position="278"/>
        <end position="283"/>
    </location>
    <ligand>
        <name>ATP</name>
        <dbReference type="ChEBI" id="CHEBI:30616"/>
        <label>2</label>
    </ligand>
</feature>
<feature type="binding site" evidence="1">
    <location>
        <begin position="325"/>
        <end position="327"/>
    </location>
    <ligand>
        <name>AMP</name>
        <dbReference type="ChEBI" id="CHEBI:456215"/>
        <label>2</label>
    </ligand>
</feature>
<feature type="binding site" evidence="1">
    <location>
        <begin position="354"/>
        <end position="357"/>
    </location>
    <ligand>
        <name>AMP</name>
        <dbReference type="ChEBI" id="CHEBI:456215"/>
        <label>2</label>
    </ligand>
</feature>
<feature type="binding site" evidence="1">
    <location>
        <position position="361"/>
    </location>
    <ligand>
        <name>AMP</name>
        <dbReference type="ChEBI" id="CHEBI:456215"/>
        <label>2</label>
    </ligand>
</feature>
<feature type="binding site" evidence="1">
    <location>
        <position position="432"/>
    </location>
    <ligand>
        <name>AMP</name>
        <dbReference type="ChEBI" id="CHEBI:456215"/>
        <label>2</label>
    </ligand>
</feature>
<reference key="1">
    <citation type="submission" date="2004-12" db="EMBL/GenBank/DDBJ databases">
        <authorList>
            <consortium name="NIH - Xenopus Gene Collection (XGC) project"/>
        </authorList>
    </citation>
    <scope>NUCLEOTIDE SEQUENCE [LARGE SCALE MRNA]</scope>
    <source>
        <tissue>Testis</tissue>
    </source>
</reference>
<evidence type="ECO:0000250" key="1">
    <source>
        <dbReference type="UniProtKB" id="P69441"/>
    </source>
</evidence>
<evidence type="ECO:0000250" key="2">
    <source>
        <dbReference type="UniProtKB" id="Q96MA6"/>
    </source>
</evidence>
<evidence type="ECO:0000305" key="3"/>
<accession>Q5M7G4</accession>
<name>KAD8_XENLA</name>
<organism>
    <name type="scientific">Xenopus laevis</name>
    <name type="common">African clawed frog</name>
    <dbReference type="NCBI Taxonomy" id="8355"/>
    <lineage>
        <taxon>Eukaryota</taxon>
        <taxon>Metazoa</taxon>
        <taxon>Chordata</taxon>
        <taxon>Craniata</taxon>
        <taxon>Vertebrata</taxon>
        <taxon>Euteleostomi</taxon>
        <taxon>Amphibia</taxon>
        <taxon>Batrachia</taxon>
        <taxon>Anura</taxon>
        <taxon>Pipoidea</taxon>
        <taxon>Pipidae</taxon>
        <taxon>Xenopodinae</taxon>
        <taxon>Xenopus</taxon>
        <taxon>Xenopus</taxon>
    </lineage>
</organism>
<sequence>MDATRKPLRIPPAMAVYAEEHGVFDIIQKMVEKVLVDRPEDPIQYMIDHLSNDNDDVPRVFILGPPASGKHTMAKLLCKRLNATHLTPENVLSSDVSLLVKEAQSYRDKGQEVPDELWAKLMRERLSQVDCIKRGWVLEGFPKTRDQALMLQMAGVCPGHLVVLDAPDIVLIERNMGKRIDITDGEVYHTTFDWPSDPAVQRNLVEPEGISEEETGQRLLEFHRNIPGLLRTYSKVSKKINVDQPYMDVFSQVLTFVLSKQRSLAPHTPRILLYGPPGSGRSLQASLLAQKYGIINICCGQVLKEAVADQTKLGELIQPYIENDQQVPDNFVLKILTDHLSSLESAKHGWVLHGFPQDTDQAALLKDAGFMPNRVFSLDLSDDVVIERLSLCMTDPVSGERYHSIYKPAPRSEVQERLQQNPKYSEEKVQARLDVYHANADELEEFYQDVIHINADQDPYTVFEFIESYIVSPLPKSLPEEPTSP</sequence>
<proteinExistence type="evidence at transcript level"/>
<comment type="function">
    <text evidence="2">Nucleoside monophosphate (NMP) kinase that catalyzes the reversible transfer of the terminal phosphate group between nucleoside triphosphates and monophosphates. Has highest activity toward AMP, and weaker activity toward dAMP, CMP and dCMP. Also displays broad nucleoside diphosphate kinase activity.</text>
</comment>
<comment type="catalytic activity">
    <reaction evidence="2">
        <text>AMP + ATP = 2 ADP</text>
        <dbReference type="Rhea" id="RHEA:12973"/>
        <dbReference type="ChEBI" id="CHEBI:30616"/>
        <dbReference type="ChEBI" id="CHEBI:456215"/>
        <dbReference type="ChEBI" id="CHEBI:456216"/>
        <dbReference type="EC" id="2.7.4.3"/>
    </reaction>
</comment>
<comment type="catalytic activity">
    <reaction evidence="2">
        <text>a 2'-deoxyribonucleoside 5'-diphosphate + ATP = a 2'-deoxyribonucleoside 5'-triphosphate + ADP</text>
        <dbReference type="Rhea" id="RHEA:44640"/>
        <dbReference type="ChEBI" id="CHEBI:30616"/>
        <dbReference type="ChEBI" id="CHEBI:61560"/>
        <dbReference type="ChEBI" id="CHEBI:73316"/>
        <dbReference type="ChEBI" id="CHEBI:456216"/>
        <dbReference type="EC" id="2.7.4.6"/>
    </reaction>
</comment>
<comment type="catalytic activity">
    <reaction evidence="2">
        <text>a ribonucleoside 5'-diphosphate + ATP = a ribonucleoside 5'-triphosphate + ADP</text>
        <dbReference type="Rhea" id="RHEA:18113"/>
        <dbReference type="ChEBI" id="CHEBI:30616"/>
        <dbReference type="ChEBI" id="CHEBI:57930"/>
        <dbReference type="ChEBI" id="CHEBI:61557"/>
        <dbReference type="ChEBI" id="CHEBI:456216"/>
        <dbReference type="EC" id="2.7.4.6"/>
    </reaction>
</comment>
<comment type="subcellular location">
    <subcellularLocation>
        <location evidence="2">Cytoplasm</location>
        <location evidence="2">Cytosol</location>
    </subcellularLocation>
</comment>
<comment type="similarity">
    <text evidence="3">Belongs to the adenylate kinase family.</text>
</comment>
<dbReference type="EC" id="2.7.4.3"/>
<dbReference type="EC" id="2.7.4.6"/>
<dbReference type="EMBL" id="BC088665">
    <property type="protein sequence ID" value="AAH88665.1"/>
    <property type="molecule type" value="mRNA"/>
</dbReference>
<dbReference type="RefSeq" id="NP_001088862.1">
    <property type="nucleotide sequence ID" value="NM_001095393.1"/>
</dbReference>
<dbReference type="SMR" id="Q5M7G4"/>
<dbReference type="DNASU" id="496205"/>
<dbReference type="GeneID" id="496205"/>
<dbReference type="KEGG" id="xla:496205"/>
<dbReference type="AGR" id="Xenbase:XB-GENE-5831351"/>
<dbReference type="CTD" id="496205"/>
<dbReference type="Xenbase" id="XB-GENE-5831351">
    <property type="gene designation" value="ak8.L"/>
</dbReference>
<dbReference type="OrthoDB" id="522106at2759"/>
<dbReference type="Proteomes" id="UP000186698">
    <property type="component" value="Chromosome 8L"/>
</dbReference>
<dbReference type="Bgee" id="496205">
    <property type="expression patterns" value="Expressed in testis and 16 other cell types or tissues"/>
</dbReference>
<dbReference type="GO" id="GO:0005737">
    <property type="term" value="C:cytoplasm"/>
    <property type="evidence" value="ECO:0000318"/>
    <property type="project" value="GO_Central"/>
</dbReference>
<dbReference type="GO" id="GO:0005829">
    <property type="term" value="C:cytosol"/>
    <property type="evidence" value="ECO:0007669"/>
    <property type="project" value="UniProtKB-SubCell"/>
</dbReference>
<dbReference type="GO" id="GO:0004127">
    <property type="term" value="F:(d)CMP kinase activity"/>
    <property type="evidence" value="ECO:0000250"/>
    <property type="project" value="UniProtKB"/>
</dbReference>
<dbReference type="GO" id="GO:0004017">
    <property type="term" value="F:adenylate kinase activity"/>
    <property type="evidence" value="ECO:0000250"/>
    <property type="project" value="UniProtKB"/>
</dbReference>
<dbReference type="GO" id="GO:0005524">
    <property type="term" value="F:ATP binding"/>
    <property type="evidence" value="ECO:0007669"/>
    <property type="project" value="UniProtKB-KW"/>
</dbReference>
<dbReference type="GO" id="GO:0004550">
    <property type="term" value="F:nucleoside diphosphate kinase activity"/>
    <property type="evidence" value="ECO:0000250"/>
    <property type="project" value="UniProtKB"/>
</dbReference>
<dbReference type="CDD" id="cd01428">
    <property type="entry name" value="ADK"/>
    <property type="match status" value="2"/>
</dbReference>
<dbReference type="CDD" id="cd22979">
    <property type="entry name" value="DD_AK8"/>
    <property type="match status" value="1"/>
</dbReference>
<dbReference type="FunFam" id="3.40.50.300:FF:001538">
    <property type="entry name" value="Adenylate kinase 8"/>
    <property type="match status" value="1"/>
</dbReference>
<dbReference type="FunFam" id="3.40.50.300:FF:001617">
    <property type="entry name" value="Adenylate kinase 8"/>
    <property type="match status" value="1"/>
</dbReference>
<dbReference type="Gene3D" id="3.40.50.300">
    <property type="entry name" value="P-loop containing nucleotide triphosphate hydrolases"/>
    <property type="match status" value="2"/>
</dbReference>
<dbReference type="HAMAP" id="MF_00235">
    <property type="entry name" value="Adenylate_kinase_Adk"/>
    <property type="match status" value="1"/>
</dbReference>
<dbReference type="InterPro" id="IPR000850">
    <property type="entry name" value="Adenylat/UMP-CMP_kin"/>
</dbReference>
<dbReference type="InterPro" id="IPR027417">
    <property type="entry name" value="P-loop_NTPase"/>
</dbReference>
<dbReference type="PANTHER" id="PTHR23359">
    <property type="entry name" value="NUCLEOTIDE KINASE"/>
    <property type="match status" value="1"/>
</dbReference>
<dbReference type="Pfam" id="PF00406">
    <property type="entry name" value="ADK"/>
    <property type="match status" value="2"/>
</dbReference>
<dbReference type="PRINTS" id="PR00094">
    <property type="entry name" value="ADENYLTKNASE"/>
</dbReference>
<dbReference type="SUPFAM" id="SSF47391">
    <property type="entry name" value="Dimerization-anchoring domain of cAMP-dependent PK regulatory subunit"/>
    <property type="match status" value="1"/>
</dbReference>
<dbReference type="SUPFAM" id="SSF52540">
    <property type="entry name" value="P-loop containing nucleoside triphosphate hydrolases"/>
    <property type="match status" value="2"/>
</dbReference>
<gene>
    <name type="primary">ak8</name>
</gene>
<protein>
    <recommendedName>
        <fullName>Adenylate kinase 8</fullName>
        <shortName>AK 8</shortName>
        <ecNumber>2.7.4.3</ecNumber>
        <ecNumber>2.7.4.6</ecNumber>
    </recommendedName>
    <alternativeName>
        <fullName>ATP-AMP transphosphorylase 8</fullName>
    </alternativeName>
</protein>